<protein>
    <recommendedName>
        <fullName evidence="4">Pre-alpha-onocerin synthase LCC</fullName>
        <ecNumber evidence="3">5.4.99.65</ecNumber>
    </recommendedName>
</protein>
<dbReference type="EC" id="5.4.99.65" evidence="3"/>
<dbReference type="EMBL" id="LC053635">
    <property type="protein sequence ID" value="BAU46471.1"/>
    <property type="molecule type" value="mRNA"/>
</dbReference>
<dbReference type="SMR" id="A0A125SXN1"/>
<dbReference type="KEGG" id="ag:BAU46471"/>
<dbReference type="BRENDA" id="5.4.99.65">
    <property type="organism ID" value="3106"/>
</dbReference>
<dbReference type="UniPathway" id="UPA00213"/>
<dbReference type="GO" id="GO:0005811">
    <property type="term" value="C:lipid droplet"/>
    <property type="evidence" value="ECO:0007669"/>
    <property type="project" value="InterPro"/>
</dbReference>
<dbReference type="GO" id="GO:0016866">
    <property type="term" value="F:intramolecular transferase activity"/>
    <property type="evidence" value="ECO:0007669"/>
    <property type="project" value="InterPro"/>
</dbReference>
<dbReference type="GO" id="GO:0016104">
    <property type="term" value="P:triterpenoid biosynthetic process"/>
    <property type="evidence" value="ECO:0000314"/>
    <property type="project" value="UniProtKB"/>
</dbReference>
<dbReference type="CDD" id="cd02892">
    <property type="entry name" value="SQCY_1"/>
    <property type="match status" value="1"/>
</dbReference>
<dbReference type="FunFam" id="1.50.10.20:FF:000011">
    <property type="entry name" value="Terpene cyclase/mutase family member"/>
    <property type="match status" value="1"/>
</dbReference>
<dbReference type="Gene3D" id="1.50.10.20">
    <property type="match status" value="2"/>
</dbReference>
<dbReference type="InterPro" id="IPR032696">
    <property type="entry name" value="SQ_cyclase_C"/>
</dbReference>
<dbReference type="InterPro" id="IPR032697">
    <property type="entry name" value="SQ_cyclase_N"/>
</dbReference>
<dbReference type="InterPro" id="IPR018333">
    <property type="entry name" value="Squalene_cyclase"/>
</dbReference>
<dbReference type="InterPro" id="IPR002365">
    <property type="entry name" value="Terpene_synthase_CS"/>
</dbReference>
<dbReference type="InterPro" id="IPR008930">
    <property type="entry name" value="Terpenoid_cyclase/PrenylTrfase"/>
</dbReference>
<dbReference type="NCBIfam" id="TIGR01787">
    <property type="entry name" value="squalene_cyclas"/>
    <property type="match status" value="1"/>
</dbReference>
<dbReference type="PANTHER" id="PTHR11764:SF20">
    <property type="entry name" value="LANOSTEROL SYNTHASE"/>
    <property type="match status" value="1"/>
</dbReference>
<dbReference type="PANTHER" id="PTHR11764">
    <property type="entry name" value="TERPENE CYCLASE/MUTASE FAMILY MEMBER"/>
    <property type="match status" value="1"/>
</dbReference>
<dbReference type="Pfam" id="PF13243">
    <property type="entry name" value="SQHop_cyclase_C"/>
    <property type="match status" value="1"/>
</dbReference>
<dbReference type="Pfam" id="PF13249">
    <property type="entry name" value="SQHop_cyclase_N"/>
    <property type="match status" value="1"/>
</dbReference>
<dbReference type="SUPFAM" id="SSF48239">
    <property type="entry name" value="Terpenoid cyclases/Protein prenyltransferases"/>
    <property type="match status" value="2"/>
</dbReference>
<dbReference type="PROSITE" id="PS01074">
    <property type="entry name" value="TERPENE_SYNTHASES"/>
    <property type="match status" value="1"/>
</dbReference>
<name>LCC_LYCCL</name>
<comment type="function">
    <text evidence="3">Oxidosqualene cyclase involved in the biosynthesis of alpha-onocerin, a triterpenoid characterized by a symmetrical structure due to cyclizations at both termini of dioxidosqualene that inhibits acetylcholinesterase. Catalyzes the first half of the cyclization, exclusively from dioxidosqualene.</text>
</comment>
<comment type="catalytic activity">
    <reaction evidence="3">
        <text>(3S,22S)-2,3:22,23-diepoxysqualene = pre-alpha-onocerin</text>
        <dbReference type="Rhea" id="RHEA:54664"/>
        <dbReference type="ChEBI" id="CHEBI:138305"/>
        <dbReference type="ChEBI" id="CHEBI:138307"/>
        <dbReference type="EC" id="5.4.99.65"/>
    </reaction>
</comment>
<comment type="pathway">
    <text evidence="3">Secondary metabolite biosynthesis; terpenoid biosynthesis.</text>
</comment>
<comment type="similarity">
    <text evidence="5">Belongs to the terpene cyclase/mutase family.</text>
</comment>
<accession>A0A125SXN1</accession>
<evidence type="ECO:0000250" key="1">
    <source>
        <dbReference type="UniProtKB" id="P48449"/>
    </source>
</evidence>
<evidence type="ECO:0000255" key="2"/>
<evidence type="ECO:0000269" key="3">
    <source>
    </source>
</evidence>
<evidence type="ECO:0000303" key="4">
    <source>
    </source>
</evidence>
<evidence type="ECO:0000305" key="5"/>
<organism>
    <name type="scientific">Lycopodium clavatum</name>
    <name type="common">Stag's-horn clubmoss</name>
    <dbReference type="NCBI Taxonomy" id="3252"/>
    <lineage>
        <taxon>Eukaryota</taxon>
        <taxon>Viridiplantae</taxon>
        <taxon>Streptophyta</taxon>
        <taxon>Embryophyta</taxon>
        <taxon>Tracheophyta</taxon>
        <taxon>Lycopodiopsida</taxon>
        <taxon>Lycopodiales</taxon>
        <taxon>Lycopodiaceae</taxon>
        <taxon>Lycopodioideae</taxon>
        <taxon>Lycopodium</taxon>
    </lineage>
</organism>
<feature type="chain" id="PRO_0000445704" description="Pre-alpha-onocerin synthase LCC">
    <location>
        <begin position="1"/>
        <end position="756"/>
    </location>
</feature>
<feature type="repeat" description="PFTB 1" evidence="2">
    <location>
        <begin position="96"/>
        <end position="138"/>
    </location>
</feature>
<feature type="repeat" description="PFTB 2" evidence="2">
    <location>
        <begin position="146"/>
        <end position="187"/>
    </location>
</feature>
<feature type="repeat" description="PFTB 3" evidence="2">
    <location>
        <begin position="438"/>
        <end position="491"/>
    </location>
</feature>
<feature type="repeat" description="PFTB 4" evidence="2">
    <location>
        <begin position="512"/>
        <end position="554"/>
    </location>
</feature>
<feature type="repeat" description="PFTB 5" evidence="2">
    <location>
        <begin position="589"/>
        <end position="629"/>
    </location>
</feature>
<feature type="repeat" description="PFTB 6" evidence="2">
    <location>
        <begin position="638"/>
        <end position="679"/>
    </location>
</feature>
<feature type="repeat" description="PFTB 7" evidence="2">
    <location>
        <begin position="700"/>
        <end position="747"/>
    </location>
</feature>
<feature type="active site" description="Proton donor" evidence="1">
    <location>
        <position position="483"/>
    </location>
</feature>
<feature type="site" description="Transition state stabilizer" evidence="1">
    <location>
        <position position="416"/>
    </location>
</feature>
<feature type="site" description="Transition state stabilizer" evidence="1">
    <location>
        <position position="610"/>
    </location>
</feature>
<reference key="1">
    <citation type="journal article" date="2016" name="ChemBioChem">
        <title>Onocerin biosynthesis requires two highly dedicated triterpene cyclases in a fern Lycopodium clavatum.</title>
        <authorList>
            <person name="Araki T."/>
            <person name="Saga Y."/>
            <person name="Marugami M."/>
            <person name="Otaka J."/>
            <person name="Araya H."/>
            <person name="Saito K."/>
            <person name="Yamazaki M."/>
            <person name="Suzuki H."/>
            <person name="Kushiro T."/>
        </authorList>
    </citation>
    <scope>NUCLEOTIDE SEQUENCE [MRNA]</scope>
    <scope>FUNCTION</scope>
    <scope>CATALYTIC ACTIVITY</scope>
    <scope>PATHWAY</scope>
</reference>
<keyword id="KW-0413">Isomerase</keyword>
<keyword id="KW-0677">Repeat</keyword>
<proteinExistence type="evidence at protein level"/>
<sequence>MWKLKIAEGSPGLDTLNDHVGRQIWCYEKDAGTPEEHAEVEEARAKFTEQRHEQRQSADILMKLQLLKENSFSPLPTQPKVDRFEDITEDAVQTTLRRALRFFAAIQAHDGHWPGDHAGLMFLTPCLVICLYVTGALNTVLSEAHRQEMRRYLYNHQNKDGGWGLNIESHSTMFCTVFSYVTLRLLEEGPHDGDEGAMESARLWILDHGGAIAIPSWGKFWLAVLGVFEWSGVHPMPPEIWFLPHFLPIHPGQMNIHGKLILLPMTYIYGRQFVGPITSLVKALRGEIFSTHYNTIDWQEARTMCAKEDRYYSTPFVQDLAFTFAKQCTEPLLRSWPGSLVRKKALERVIKWIHTEDKNFRYVGIGPLSKVSVMLCCWIEDPNSEAFKRHLLRVHDYLWLAEDGMKMQGYNGCQMWETVLGTQAVLSARMHDECNSMLRKAEDYISKTQIQEDGNLDTKLWYHKISKGGWPHSTRDHGWPISDCSAEGLKVALALADLPWAMTGSQISEENLFDCVNVILSLQNPDGGFSAFELKRAYPWAEKLLQSETFGDITIDYSWVECSSSCIQALVAFKKKYTTHRKEEICRAINRACRFIESIQRKDGSWYGYWAVCFTYGAWFGITGLVAAGKSFHESEAIRRACDFLLSKQLPSGGWGESYLSSENEEYTHLKHGRAHVVHTAWSLLALLASGQAERDPVPLHRAATILINSQLENGDYPQQEIVGAIHKTCMTTYTLFCNIFAIQALGEYRQKIFHS</sequence>
<gene>
    <name evidence="4" type="primary">LCC</name>
</gene>